<sequence length="59" mass="6002">MAEHRGGSGNFAEDREKASDAGRKGGQHSGGNFKNDPQRASEAGKKGGQQSGGNKSGKS</sequence>
<keyword id="KW-1185">Reference proteome</keyword>
<evidence type="ECO:0000256" key="1">
    <source>
        <dbReference type="SAM" id="MobiDB-lite"/>
    </source>
</evidence>
<evidence type="ECO:0000305" key="2"/>
<gene>
    <name type="primary">yciG</name>
    <name type="ordered locus">b1259</name>
    <name type="ordered locus">JW1251</name>
</gene>
<protein>
    <recommendedName>
        <fullName>Uncharacterized protein YciG</fullName>
    </recommendedName>
</protein>
<proteinExistence type="inferred from homology"/>
<reference key="1">
    <citation type="journal article" date="1988" name="Genetics">
        <title>Molecular evolution of the Escherichia coli chromosome. I. Analysis of structure and natural variation in a previously uncharacterized region between trp and tonB.</title>
        <authorList>
            <person name="Stoltzfus A."/>
            <person name="Leslie J.F."/>
            <person name="Milkman R."/>
        </authorList>
    </citation>
    <scope>NUCLEOTIDE SEQUENCE [GENOMIC DNA]</scope>
    <source>
        <strain>K12</strain>
    </source>
</reference>
<reference key="2">
    <citation type="submission" date="1995-04" db="EMBL/GenBank/DDBJ databases">
        <authorList>
            <person name="Milkman R."/>
        </authorList>
    </citation>
    <scope>NUCLEOTIDE SEQUENCE [GENOMIC DNA]</scope>
    <source>
        <strain>K12</strain>
        <strain>Various ECOR strains</strain>
    </source>
</reference>
<reference key="3">
    <citation type="journal article" date="1996" name="DNA Res.">
        <title>A 570-kb DNA sequence of the Escherichia coli K-12 genome corresponding to the 28.0-40.1 min region on the linkage map.</title>
        <authorList>
            <person name="Aiba H."/>
            <person name="Baba T."/>
            <person name="Fujita K."/>
            <person name="Hayashi K."/>
            <person name="Inada T."/>
            <person name="Isono K."/>
            <person name="Itoh T."/>
            <person name="Kasai H."/>
            <person name="Kashimoto K."/>
            <person name="Kimura S."/>
            <person name="Kitakawa M."/>
            <person name="Kitagawa M."/>
            <person name="Makino K."/>
            <person name="Miki T."/>
            <person name="Mizobuchi K."/>
            <person name="Mori H."/>
            <person name="Mori T."/>
            <person name="Motomura K."/>
            <person name="Nakade S."/>
            <person name="Nakamura Y."/>
            <person name="Nashimoto H."/>
            <person name="Nishio Y."/>
            <person name="Oshima T."/>
            <person name="Saito N."/>
            <person name="Sampei G."/>
            <person name="Seki Y."/>
            <person name="Sivasundaram S."/>
            <person name="Tagami H."/>
            <person name="Takeda J."/>
            <person name="Takemoto K."/>
            <person name="Takeuchi Y."/>
            <person name="Wada C."/>
            <person name="Yamamoto Y."/>
            <person name="Horiuchi T."/>
        </authorList>
    </citation>
    <scope>NUCLEOTIDE SEQUENCE [LARGE SCALE GENOMIC DNA]</scope>
    <source>
        <strain>K12 / W3110 / ATCC 27325 / DSM 5911</strain>
    </source>
</reference>
<reference key="4">
    <citation type="journal article" date="1997" name="Science">
        <title>The complete genome sequence of Escherichia coli K-12.</title>
        <authorList>
            <person name="Blattner F.R."/>
            <person name="Plunkett G. III"/>
            <person name="Bloch C.A."/>
            <person name="Perna N.T."/>
            <person name="Burland V."/>
            <person name="Riley M."/>
            <person name="Collado-Vides J."/>
            <person name="Glasner J.D."/>
            <person name="Rode C.K."/>
            <person name="Mayhew G.F."/>
            <person name="Gregor J."/>
            <person name="Davis N.W."/>
            <person name="Kirkpatrick H.A."/>
            <person name="Goeden M.A."/>
            <person name="Rose D.J."/>
            <person name="Mau B."/>
            <person name="Shao Y."/>
        </authorList>
    </citation>
    <scope>NUCLEOTIDE SEQUENCE [LARGE SCALE GENOMIC DNA]</scope>
    <source>
        <strain>K12 / MG1655 / ATCC 47076</strain>
    </source>
</reference>
<reference key="5">
    <citation type="journal article" date="2006" name="Mol. Syst. Biol.">
        <title>Highly accurate genome sequences of Escherichia coli K-12 strains MG1655 and W3110.</title>
        <authorList>
            <person name="Hayashi K."/>
            <person name="Morooka N."/>
            <person name="Yamamoto Y."/>
            <person name="Fujita K."/>
            <person name="Isono K."/>
            <person name="Choi S."/>
            <person name="Ohtsubo E."/>
            <person name="Baba T."/>
            <person name="Wanner B.L."/>
            <person name="Mori H."/>
            <person name="Horiuchi T."/>
        </authorList>
    </citation>
    <scope>NUCLEOTIDE SEQUENCE [LARGE SCALE GENOMIC DNA]</scope>
    <scope>SEQUENCE REVISION TO 28</scope>
    <source>
        <strain>K12 / W3110 / ATCC 27325 / DSM 5911</strain>
    </source>
</reference>
<accession>P21361</accession>
<accession>P76030</accession>
<accession>P76832</accession>
<name>YCIG_ECOLI</name>
<dbReference type="EMBL" id="X13583">
    <property type="protein sequence ID" value="CAA31919.1"/>
    <property type="molecule type" value="Genomic_DNA"/>
</dbReference>
<dbReference type="EMBL" id="U23489">
    <property type="protein sequence ID" value="AAB60036.1"/>
    <property type="molecule type" value="Genomic_DNA"/>
</dbReference>
<dbReference type="EMBL" id="U23490">
    <property type="protein sequence ID" value="AAA65141.1"/>
    <property type="molecule type" value="Genomic_DNA"/>
</dbReference>
<dbReference type="EMBL" id="U23491">
    <property type="protein sequence ID" value="AAA65147.1"/>
    <property type="molecule type" value="Genomic_DNA"/>
</dbReference>
<dbReference type="EMBL" id="U23492">
    <property type="protein sequence ID" value="AAA65153.1"/>
    <property type="molecule type" value="Genomic_DNA"/>
</dbReference>
<dbReference type="EMBL" id="U23493">
    <property type="protein sequence ID" value="AAA65159.1"/>
    <property type="molecule type" value="Genomic_DNA"/>
</dbReference>
<dbReference type="EMBL" id="U23495">
    <property type="protein sequence ID" value="AAB60042.1"/>
    <property type="molecule type" value="Genomic_DNA"/>
</dbReference>
<dbReference type="EMBL" id="U23496">
    <property type="protein sequence ID" value="AAA65171.1"/>
    <property type="molecule type" value="Genomic_DNA"/>
</dbReference>
<dbReference type="EMBL" id="U23497">
    <property type="protein sequence ID" value="AAB60047.1"/>
    <property type="molecule type" value="Genomic_DNA"/>
</dbReference>
<dbReference type="EMBL" id="U25417">
    <property type="protein sequence ID" value="AAA73792.1"/>
    <property type="molecule type" value="Genomic_DNA"/>
</dbReference>
<dbReference type="EMBL" id="U25418">
    <property type="protein sequence ID" value="AAA73798.1"/>
    <property type="molecule type" value="Genomic_DNA"/>
</dbReference>
<dbReference type="EMBL" id="U25419">
    <property type="protein sequence ID" value="AAA73804.1"/>
    <property type="molecule type" value="Genomic_DNA"/>
</dbReference>
<dbReference type="EMBL" id="U25420">
    <property type="protein sequence ID" value="AAA73810.1"/>
    <property type="molecule type" value="Genomic_DNA"/>
</dbReference>
<dbReference type="EMBL" id="U25421">
    <property type="protein sequence ID" value="AAA73816.1"/>
    <property type="molecule type" value="Genomic_DNA"/>
</dbReference>
<dbReference type="EMBL" id="U25422">
    <property type="protein sequence ID" value="AAA73822.1"/>
    <property type="molecule type" value="Genomic_DNA"/>
</dbReference>
<dbReference type="EMBL" id="U25423">
    <property type="protein sequence ID" value="AAA73828.1"/>
    <property type="molecule type" value="Genomic_DNA"/>
</dbReference>
<dbReference type="EMBL" id="U25425">
    <property type="protein sequence ID" value="AAA73834.1"/>
    <property type="molecule type" value="Genomic_DNA"/>
</dbReference>
<dbReference type="EMBL" id="U25427">
    <property type="protein sequence ID" value="AAA73846.1"/>
    <property type="molecule type" value="Genomic_DNA"/>
</dbReference>
<dbReference type="EMBL" id="U25429">
    <property type="protein sequence ID" value="AAA73858.1"/>
    <property type="molecule type" value="Genomic_DNA"/>
</dbReference>
<dbReference type="EMBL" id="U00096">
    <property type="protein sequence ID" value="AAC74341.2"/>
    <property type="molecule type" value="Genomic_DNA"/>
</dbReference>
<dbReference type="EMBL" id="AP009048">
    <property type="protein sequence ID" value="BAA14791.2"/>
    <property type="molecule type" value="Genomic_DNA"/>
</dbReference>
<dbReference type="PIR" id="F64873">
    <property type="entry name" value="F64873"/>
</dbReference>
<dbReference type="RefSeq" id="NP_415775.4">
    <property type="nucleotide sequence ID" value="NC_000913.3"/>
</dbReference>
<dbReference type="RefSeq" id="WP_000807651.1">
    <property type="nucleotide sequence ID" value="NZ_STEB01000005.1"/>
</dbReference>
<dbReference type="BioGRID" id="4261596">
    <property type="interactions" value="18"/>
</dbReference>
<dbReference type="FunCoup" id="P21361">
    <property type="interactions" value="48"/>
</dbReference>
<dbReference type="IntAct" id="P21361">
    <property type="interactions" value="6"/>
</dbReference>
<dbReference type="STRING" id="511145.b1259"/>
<dbReference type="jPOST" id="P21361"/>
<dbReference type="PaxDb" id="511145-b1259"/>
<dbReference type="EnsemblBacteria" id="AAC74341">
    <property type="protein sequence ID" value="AAC74341"/>
    <property type="gene ID" value="b1259"/>
</dbReference>
<dbReference type="GeneID" id="947489"/>
<dbReference type="KEGG" id="ecj:JW1251"/>
<dbReference type="KEGG" id="eco:b1259"/>
<dbReference type="KEGG" id="ecoc:C3026_07390"/>
<dbReference type="PATRIC" id="fig|511145.12.peg.1309"/>
<dbReference type="EchoBASE" id="EB1117"/>
<dbReference type="eggNOG" id="COG3729">
    <property type="taxonomic scope" value="Bacteria"/>
</dbReference>
<dbReference type="HOGENOM" id="CLU_142865_5_1_6"/>
<dbReference type="InParanoid" id="P21361"/>
<dbReference type="OMA" id="GREDSHK"/>
<dbReference type="OrthoDB" id="6565901at2"/>
<dbReference type="PhylomeDB" id="P21361"/>
<dbReference type="BioCyc" id="EcoCyc:EG11127-MONOMER"/>
<dbReference type="PRO" id="PR:P21361"/>
<dbReference type="Proteomes" id="UP000000625">
    <property type="component" value="Chromosome"/>
</dbReference>
<dbReference type="GO" id="GO:0071978">
    <property type="term" value="P:bacterial-type flagellum-dependent swarming motility"/>
    <property type="evidence" value="ECO:0000315"/>
    <property type="project" value="EcoliWiki"/>
</dbReference>
<dbReference type="InterPro" id="IPR019626">
    <property type="entry name" value="Stress-induced_KGG_rpt"/>
</dbReference>
<dbReference type="Pfam" id="PF10685">
    <property type="entry name" value="KGG"/>
    <property type="match status" value="2"/>
</dbReference>
<feature type="chain" id="PRO_0000168875" description="Uncharacterized protein YciG">
    <location>
        <begin position="1"/>
        <end position="59"/>
    </location>
</feature>
<feature type="region of interest" description="Disordered" evidence="1">
    <location>
        <begin position="1"/>
        <end position="59"/>
    </location>
</feature>
<feature type="compositionally biased region" description="Basic and acidic residues" evidence="1">
    <location>
        <begin position="1"/>
        <end position="23"/>
    </location>
</feature>
<feature type="compositionally biased region" description="Basic and acidic residues" evidence="1">
    <location>
        <begin position="36"/>
        <end position="45"/>
    </location>
</feature>
<feature type="compositionally biased region" description="Gly residues" evidence="1">
    <location>
        <begin position="46"/>
        <end position="59"/>
    </location>
</feature>
<feature type="sequence conflict" description="In Ref. 3; no nucleotide entry." evidence="2" ref="3">
    <original>H</original>
    <variation>R</variation>
    <location>
        <position position="28"/>
    </location>
</feature>
<comment type="similarity">
    <text evidence="2">Belongs to the con-10 family.</text>
</comment>
<organism>
    <name type="scientific">Escherichia coli (strain K12)</name>
    <dbReference type="NCBI Taxonomy" id="83333"/>
    <lineage>
        <taxon>Bacteria</taxon>
        <taxon>Pseudomonadati</taxon>
        <taxon>Pseudomonadota</taxon>
        <taxon>Gammaproteobacteria</taxon>
        <taxon>Enterobacterales</taxon>
        <taxon>Enterobacteriaceae</taxon>
        <taxon>Escherichia</taxon>
    </lineage>
</organism>